<comment type="function">
    <text evidence="1">Protamines substitute for histones in the chromatin of sperm during the haploid phase of spermatogenesis. They compact sperm DNA into a highly condensed, stable and inactive complex (By similarity).</text>
</comment>
<comment type="subcellular location">
    <subcellularLocation>
        <location evidence="1">Nucleus</location>
    </subcellularLocation>
    <subcellularLocation>
        <location evidence="1">Chromosome</location>
    </subcellularLocation>
</comment>
<comment type="tissue specificity">
    <text>Testis.</text>
</comment>
<comment type="similarity">
    <text evidence="3">Belongs to the protamine P1 family.</text>
</comment>
<accession>Q71UG5</accession>
<gene>
    <name type="primary">PRM1</name>
</gene>
<dbReference type="EMBL" id="AF089876">
    <property type="protein sequence ID" value="AAD55335.1"/>
    <property type="molecule type" value="Genomic_DNA"/>
</dbReference>
<dbReference type="GO" id="GO:0000786">
    <property type="term" value="C:nucleosome"/>
    <property type="evidence" value="ECO:0007669"/>
    <property type="project" value="UniProtKB-KW"/>
</dbReference>
<dbReference type="GO" id="GO:0005634">
    <property type="term" value="C:nucleus"/>
    <property type="evidence" value="ECO:0007669"/>
    <property type="project" value="UniProtKB-SubCell"/>
</dbReference>
<dbReference type="GO" id="GO:0003677">
    <property type="term" value="F:DNA binding"/>
    <property type="evidence" value="ECO:0007669"/>
    <property type="project" value="UniProtKB-KW"/>
</dbReference>
<dbReference type="GO" id="GO:0030261">
    <property type="term" value="P:chromosome condensation"/>
    <property type="evidence" value="ECO:0007669"/>
    <property type="project" value="UniProtKB-KW"/>
</dbReference>
<dbReference type="GO" id="GO:0035092">
    <property type="term" value="P:sperm DNA condensation"/>
    <property type="evidence" value="ECO:0007669"/>
    <property type="project" value="InterPro"/>
</dbReference>
<dbReference type="InterPro" id="IPR000221">
    <property type="entry name" value="Protamine_P1"/>
</dbReference>
<dbReference type="PROSITE" id="PS00048">
    <property type="entry name" value="PROTAMINE_P1"/>
    <property type="match status" value="1"/>
</dbReference>
<feature type="chain" id="PRO_0000191565" description="Sperm protamine P1">
    <location>
        <begin position="1"/>
        <end position="63"/>
    </location>
</feature>
<feature type="region of interest" description="Disordered" evidence="2">
    <location>
        <begin position="1"/>
        <end position="63"/>
    </location>
</feature>
<evidence type="ECO:0000250" key="1"/>
<evidence type="ECO:0000256" key="2">
    <source>
        <dbReference type="SAM" id="MobiDB-lite"/>
    </source>
</evidence>
<evidence type="ECO:0000305" key="3"/>
<organism>
    <name type="scientific">Sminthopsis gilberti</name>
    <name type="common">Gilbert's dunnart</name>
    <dbReference type="NCBI Taxonomy" id="75755"/>
    <lineage>
        <taxon>Eukaryota</taxon>
        <taxon>Metazoa</taxon>
        <taxon>Chordata</taxon>
        <taxon>Craniata</taxon>
        <taxon>Vertebrata</taxon>
        <taxon>Euteleostomi</taxon>
        <taxon>Mammalia</taxon>
        <taxon>Metatheria</taxon>
        <taxon>Dasyuromorphia</taxon>
        <taxon>Dasyuridae</taxon>
        <taxon>Sminthopsis</taxon>
    </lineage>
</organism>
<sequence>MARYRRHSRSRSRSRYRRRRRRRSRHHNRRRTYRRSRRHSRRRRGRRRGYSRRRYSRRGRRRY</sequence>
<name>HSP1_SMIGI</name>
<proteinExistence type="evidence at transcript level"/>
<keyword id="KW-0158">Chromosome</keyword>
<keyword id="KW-0217">Developmental protein</keyword>
<keyword id="KW-0221">Differentiation</keyword>
<keyword id="KW-0226">DNA condensation</keyword>
<keyword id="KW-0238">DNA-binding</keyword>
<keyword id="KW-0544">Nucleosome core</keyword>
<keyword id="KW-0539">Nucleus</keyword>
<keyword id="KW-0744">Spermatogenesis</keyword>
<reference key="1">
    <citation type="journal article" date="1999" name="Mol. Phylogenet. Evol.">
        <title>Systematic relationships within the dasyurid marsupial tribe Sminthopsini -- a multigene approach.</title>
        <authorList>
            <person name="Blacket M.J."/>
            <person name="Krajewski C."/>
            <person name="Labrinidis A."/>
            <person name="Cambron B."/>
            <person name="Cooper S."/>
            <person name="Westerman M."/>
        </authorList>
    </citation>
    <scope>NUCLEOTIDE SEQUENCE [GENOMIC DNA]</scope>
</reference>
<protein>
    <recommendedName>
        <fullName>Sperm protamine P1</fullName>
    </recommendedName>
</protein>